<proteinExistence type="inferred from homology"/>
<sequence>MMNKICLYLPLFFSSLTMANEPVERVISLAPHATEIAYAAGLGDKLIAVSEMSDYPKEAGELEKVSNYQGIKLERIIALQPDLVIAWPAGNPAKELEKLKQFGVPIYYSTTGTLEDIANNIEQLSQYSDDPSKGQKAARDFREELTALKAKYNTTEKVRYFYQLSEKPIITVAGKNWPSEVFNFCGGENVFANTAAPYPQVSIEQVITRQPEVLFTSRHAMSDDGMWAQWKNELPALRNNHVWSLNSDWINRPTPRTLNAIIEVCEHFESVKRKR</sequence>
<reference key="1">
    <citation type="journal article" date="2003" name="Lancet">
        <title>Genome sequence of Vibrio parahaemolyticus: a pathogenic mechanism distinct from that of V. cholerae.</title>
        <authorList>
            <person name="Makino K."/>
            <person name="Oshima K."/>
            <person name="Kurokawa K."/>
            <person name="Yokoyama K."/>
            <person name="Uda T."/>
            <person name="Tagomori K."/>
            <person name="Iijima Y."/>
            <person name="Najima M."/>
            <person name="Nakano M."/>
            <person name="Yamashita A."/>
            <person name="Kubota Y."/>
            <person name="Kimura S."/>
            <person name="Yasunaga T."/>
            <person name="Honda T."/>
            <person name="Shinagawa H."/>
            <person name="Hattori M."/>
            <person name="Iida T."/>
        </authorList>
    </citation>
    <scope>NUCLEOTIDE SEQUENCE [LARGE SCALE GENOMIC DNA]</scope>
    <source>
        <strain>RIMD 2210633</strain>
    </source>
</reference>
<evidence type="ECO:0000255" key="1">
    <source>
        <dbReference type="HAMAP-Rule" id="MF_01000"/>
    </source>
</evidence>
<accession>Q87SE7</accession>
<dbReference type="EMBL" id="BA000031">
    <property type="protein sequence ID" value="BAC58740.1"/>
    <property type="molecule type" value="Genomic_DNA"/>
</dbReference>
<dbReference type="RefSeq" id="NP_796856.1">
    <property type="nucleotide sequence ID" value="NC_004603.1"/>
</dbReference>
<dbReference type="SMR" id="Q87SE7"/>
<dbReference type="KEGG" id="vpa:VP0477"/>
<dbReference type="PATRIC" id="fig|223926.6.peg.454"/>
<dbReference type="eggNOG" id="COG0614">
    <property type="taxonomic scope" value="Bacteria"/>
</dbReference>
<dbReference type="HOGENOM" id="CLU_038034_2_5_6"/>
<dbReference type="Proteomes" id="UP000002493">
    <property type="component" value="Chromosome 1"/>
</dbReference>
<dbReference type="GO" id="GO:0042597">
    <property type="term" value="C:periplasmic space"/>
    <property type="evidence" value="ECO:0007669"/>
    <property type="project" value="UniProtKB-SubCell"/>
</dbReference>
<dbReference type="GO" id="GO:0031419">
    <property type="term" value="F:cobalamin binding"/>
    <property type="evidence" value="ECO:0007669"/>
    <property type="project" value="InterPro"/>
</dbReference>
<dbReference type="GO" id="GO:0071281">
    <property type="term" value="P:cellular response to iron ion"/>
    <property type="evidence" value="ECO:0007669"/>
    <property type="project" value="TreeGrafter"/>
</dbReference>
<dbReference type="GO" id="GO:0015889">
    <property type="term" value="P:cobalamin transport"/>
    <property type="evidence" value="ECO:0007669"/>
    <property type="project" value="UniProtKB-UniRule"/>
</dbReference>
<dbReference type="CDD" id="cd01144">
    <property type="entry name" value="BtuF"/>
    <property type="match status" value="1"/>
</dbReference>
<dbReference type="Gene3D" id="3.40.50.1980">
    <property type="entry name" value="Nitrogenase molybdenum iron protein domain"/>
    <property type="match status" value="2"/>
</dbReference>
<dbReference type="HAMAP" id="MF_01000">
    <property type="entry name" value="BtuF"/>
    <property type="match status" value="1"/>
</dbReference>
<dbReference type="InterPro" id="IPR050902">
    <property type="entry name" value="ABC_Transporter_SBP"/>
</dbReference>
<dbReference type="InterPro" id="IPR002491">
    <property type="entry name" value="ABC_transptr_periplasmic_BD"/>
</dbReference>
<dbReference type="InterPro" id="IPR023544">
    <property type="entry name" value="ABC_transptr_vit_B12-bd"/>
</dbReference>
<dbReference type="InterPro" id="IPR054828">
    <property type="entry name" value="Vit_B12_bind_prot"/>
</dbReference>
<dbReference type="NCBIfam" id="NF002894">
    <property type="entry name" value="PRK03379.1"/>
    <property type="match status" value="1"/>
</dbReference>
<dbReference type="NCBIfam" id="NF038402">
    <property type="entry name" value="TroA_like"/>
    <property type="match status" value="1"/>
</dbReference>
<dbReference type="PANTHER" id="PTHR30535:SF34">
    <property type="entry name" value="MOLYBDATE-BINDING PROTEIN MOLA"/>
    <property type="match status" value="1"/>
</dbReference>
<dbReference type="PANTHER" id="PTHR30535">
    <property type="entry name" value="VITAMIN B12-BINDING PROTEIN"/>
    <property type="match status" value="1"/>
</dbReference>
<dbReference type="Pfam" id="PF01497">
    <property type="entry name" value="Peripla_BP_2"/>
    <property type="match status" value="1"/>
</dbReference>
<dbReference type="SUPFAM" id="SSF53807">
    <property type="entry name" value="Helical backbone' metal receptor"/>
    <property type="match status" value="1"/>
</dbReference>
<dbReference type="PROSITE" id="PS50983">
    <property type="entry name" value="FE_B12_PBP"/>
    <property type="match status" value="1"/>
</dbReference>
<organism>
    <name type="scientific">Vibrio parahaemolyticus serotype O3:K6 (strain RIMD 2210633)</name>
    <dbReference type="NCBI Taxonomy" id="223926"/>
    <lineage>
        <taxon>Bacteria</taxon>
        <taxon>Pseudomonadati</taxon>
        <taxon>Pseudomonadota</taxon>
        <taxon>Gammaproteobacteria</taxon>
        <taxon>Vibrionales</taxon>
        <taxon>Vibrionaceae</taxon>
        <taxon>Vibrio</taxon>
    </lineage>
</organism>
<gene>
    <name evidence="1" type="primary">btuF</name>
    <name type="ordered locus">VP0477</name>
</gene>
<comment type="function">
    <text evidence="1">Part of the ABC transporter complex BtuCDF involved in vitamin B12 import. Binds vitamin B12 and delivers it to the periplasmic surface of BtuC.</text>
</comment>
<comment type="subunit">
    <text evidence="1">The complex is composed of two ATP-binding proteins (BtuD), two transmembrane proteins (BtuC) and a solute-binding protein (BtuF).</text>
</comment>
<comment type="subcellular location">
    <subcellularLocation>
        <location evidence="1">Periplasm</location>
    </subcellularLocation>
</comment>
<comment type="similarity">
    <text evidence="1">Belongs to the BtuF family.</text>
</comment>
<protein>
    <recommendedName>
        <fullName evidence="1">Vitamin B12-binding protein</fullName>
    </recommendedName>
</protein>
<keyword id="KW-1015">Disulfide bond</keyword>
<keyword id="KW-0574">Periplasm</keyword>
<keyword id="KW-0732">Signal</keyword>
<keyword id="KW-0813">Transport</keyword>
<name>BTUF_VIBPA</name>
<feature type="signal peptide" evidence="1">
    <location>
        <begin position="1"/>
        <end position="19"/>
    </location>
</feature>
<feature type="chain" id="PRO_0000003509" description="Vitamin B12-binding protein">
    <location>
        <begin position="20"/>
        <end position="275"/>
    </location>
</feature>
<feature type="domain" description="Fe/B12 periplasmic-binding" evidence="1">
    <location>
        <begin position="25"/>
        <end position="272"/>
    </location>
</feature>
<feature type="site" description="Important for BtuC binding" evidence="1">
    <location>
        <position position="74"/>
    </location>
</feature>
<feature type="site" description="Important for BtuC binding" evidence="1">
    <location>
        <position position="204"/>
    </location>
</feature>
<feature type="disulfide bond" evidence="1">
    <location>
        <begin position="185"/>
        <end position="265"/>
    </location>
</feature>